<protein>
    <recommendedName>
        <fullName evidence="9">Glutamine synthetase</fullName>
        <shortName evidence="9">GS</shortName>
        <ecNumber evidence="7">6.3.1.2</ecNumber>
    </recommendedName>
    <alternativeName>
        <fullName evidence="9">Glutamate decarboxylase</fullName>
        <ecNumber evidence="7">4.1.1.15</ecNumber>
    </alternativeName>
    <alternativeName>
        <fullName evidence="10">Glutamate--ammonia ligase</fullName>
    </alternativeName>
    <alternativeName>
        <fullName>p42</fullName>
    </alternativeName>
</protein>
<sequence>MATSASSHLSKAIKHMYMKLPQGEKVQAMYIWIDGTGEHLRCKTRTLDHEPKSLEDLPEWNFDGSSTFQAEGSNSDMYLRPAAMFRDPFRKDPNKLVLCEVFKYNRQSADTNLRHTCRRIMDMVSNQHPWFGMEQEYTLLGTDGHPFGWPSNCFPGPQGPYYCGVGADKAYGRDIVEAHYRACLYAGVKIGGTNAEVMPAQWEFQVGPCEGIEMGDHLWIARFILHRVCEDFGVIVSFDPKPIPGNWNGAGCHTNFSTKNMREDGGLKHIEEAIEKLSKRHQYHIRAYDPKGGLDNARRLTGFHETSSIHEFSAGVANRGASIRIPRNVGHEKKGYFEDRGPSANCDPYAVTEALVRTCLLNETGDEPFEYKN</sequence>
<gene>
    <name evidence="1" type="primary">GLUL</name>
    <name type="synonym">GLNS</name>
</gene>
<keyword id="KW-0067">ATP-binding</keyword>
<keyword id="KW-0963">Cytoplasm</keyword>
<keyword id="KW-0436">Ligase</keyword>
<keyword id="KW-0456">Lyase</keyword>
<keyword id="KW-0460">Magnesium</keyword>
<keyword id="KW-0464">Manganese</keyword>
<keyword id="KW-0479">Metal-binding</keyword>
<keyword id="KW-0496">Mitochondrion</keyword>
<keyword id="KW-0547">Nucleotide-binding</keyword>
<keyword id="KW-1185">Reference proteome</keyword>
<organism>
    <name type="scientific">Gallus gallus</name>
    <name type="common">Chicken</name>
    <dbReference type="NCBI Taxonomy" id="9031"/>
    <lineage>
        <taxon>Eukaryota</taxon>
        <taxon>Metazoa</taxon>
        <taxon>Chordata</taxon>
        <taxon>Craniata</taxon>
        <taxon>Vertebrata</taxon>
        <taxon>Euteleostomi</taxon>
        <taxon>Archelosauria</taxon>
        <taxon>Archosauria</taxon>
        <taxon>Dinosauria</taxon>
        <taxon>Saurischia</taxon>
        <taxon>Theropoda</taxon>
        <taxon>Coelurosauria</taxon>
        <taxon>Aves</taxon>
        <taxon>Neognathae</taxon>
        <taxon>Galloanserae</taxon>
        <taxon>Galliformes</taxon>
        <taxon>Phasianidae</taxon>
        <taxon>Phasianinae</taxon>
        <taxon>Gallus</taxon>
    </lineage>
</organism>
<comment type="function">
    <text evidence="7 8">Glutamine synthetase that catalyzes the ATP-dependent conversion of glutamate and ammonia to glutamine (PubMed:19895308). When expressed in liver, it may be involved in detoxifying intramitochondrially generated ammonia (PubMed:4401992). Also acts as glutamate decarboxylase by catalyzing the production of 4-aminobutanoate (gamma-aminobutyric acid, GABA) in a pyridoxal phosphate-independent manner (PubMed:19895308).</text>
</comment>
<comment type="catalytic activity">
    <reaction evidence="7">
        <text>L-glutamate + NH4(+) + ATP = L-glutamine + ADP + phosphate + H(+)</text>
        <dbReference type="Rhea" id="RHEA:16169"/>
        <dbReference type="ChEBI" id="CHEBI:15378"/>
        <dbReference type="ChEBI" id="CHEBI:28938"/>
        <dbReference type="ChEBI" id="CHEBI:29985"/>
        <dbReference type="ChEBI" id="CHEBI:30616"/>
        <dbReference type="ChEBI" id="CHEBI:43474"/>
        <dbReference type="ChEBI" id="CHEBI:58359"/>
        <dbReference type="ChEBI" id="CHEBI:456216"/>
        <dbReference type="EC" id="6.3.1.2"/>
    </reaction>
</comment>
<comment type="catalytic activity">
    <reaction evidence="7">
        <text>L-glutamate + H(+) = 4-aminobutanoate + CO2</text>
        <dbReference type="Rhea" id="RHEA:17785"/>
        <dbReference type="ChEBI" id="CHEBI:15378"/>
        <dbReference type="ChEBI" id="CHEBI:16526"/>
        <dbReference type="ChEBI" id="CHEBI:29985"/>
        <dbReference type="ChEBI" id="CHEBI:59888"/>
        <dbReference type="EC" id="4.1.1.15"/>
    </reaction>
</comment>
<comment type="cofactor">
    <cofactor evidence="7">
        <name>biotin</name>
        <dbReference type="ChEBI" id="CHEBI:57586"/>
    </cofactor>
</comment>
<comment type="cofactor">
    <cofactor evidence="7">
        <name>Mg(2+)</name>
        <dbReference type="ChEBI" id="CHEBI:18420"/>
    </cofactor>
    <cofactor evidence="7">
        <name>Mn(2+)</name>
        <dbReference type="ChEBI" id="CHEBI:29035"/>
    </cofactor>
</comment>
<comment type="activity regulation">
    <text evidence="7">Glutamate to glutamine ratio influences catalytic activity (PubMed:19895308). At glutamate to glutamine ratios greater than 4, decarboxylase activity ceases (PubMed:19895308). In the presence of manganese, synthetase activity is limited to concentrations between 10 mM and 20 mM, whereas decarboxylase activity is not affected (PubMed:19895308). Both catalytic activities are inhibited by avidin (PubMed:19895308).</text>
</comment>
<comment type="subunit">
    <text evidence="7">Homooctamer and homotetramer.</text>
</comment>
<comment type="subcellular location">
    <subcellularLocation>
        <location evidence="5">Cytoplasm</location>
    </subcellularLocation>
    <subcellularLocation>
        <location evidence="8">Mitochondrion</location>
    </subcellularLocation>
    <text evidence="5 8">In the liver found in mitochondria, in brain and retina in the cytoplasm (PubMed:12965260, PubMed:4401992). In retinal cells found in the outer part of the inner nuclear layer and in the bacillary layer of the photoreceptor, and is probably associated with the cell membrane (PubMed:12965260, PubMed:4401992).</text>
</comment>
<comment type="tissue specificity">
    <text evidence="6">Expressed in retina, brain and liver (PubMed:1356223). Little or no detectable expression in breast muscle, pancreas and spleen (PubMed:1356223).</text>
</comment>
<comment type="developmental stage">
    <text evidence="5">Weakly expressed in retina on embryonic day 18, with levels increasing until day 6 after hatching and then remaining high until day 21 (at protein level).</text>
</comment>
<comment type="induction">
    <text evidence="5">In the retina, down-regulated upon application of glutamate concentrations of 15 umol/eye or higher.</text>
</comment>
<comment type="similarity">
    <text evidence="10">Belongs to the glutamine synthetase family.</text>
</comment>
<dbReference type="EC" id="6.3.1.2" evidence="7"/>
<dbReference type="EC" id="4.1.1.15" evidence="7"/>
<dbReference type="EMBL" id="M29076">
    <property type="protein sequence ID" value="AAA48783.1"/>
    <property type="molecule type" value="mRNA"/>
</dbReference>
<dbReference type="EMBL" id="S45408">
    <property type="protein sequence ID" value="AAC69361.1"/>
    <property type="molecule type" value="mRNA"/>
</dbReference>
<dbReference type="EMBL" id="EU369427">
    <property type="protein sequence ID" value="ABY71840.1"/>
    <property type="molecule type" value="Genomic_DNA"/>
</dbReference>
<dbReference type="PIR" id="JQ0025">
    <property type="entry name" value="AJCHQ"/>
</dbReference>
<dbReference type="RefSeq" id="NP_990824.1">
    <property type="nucleotide sequence ID" value="NM_205493.1"/>
</dbReference>
<dbReference type="SMR" id="P16580"/>
<dbReference type="BioGRID" id="676736">
    <property type="interactions" value="1"/>
</dbReference>
<dbReference type="FunCoup" id="P16580">
    <property type="interactions" value="2520"/>
</dbReference>
<dbReference type="IntAct" id="P16580">
    <property type="interactions" value="1"/>
</dbReference>
<dbReference type="STRING" id="9031.ENSGALP00000067937"/>
<dbReference type="PaxDb" id="9031-ENSGALP00000005819"/>
<dbReference type="GeneID" id="396489"/>
<dbReference type="KEGG" id="gga:396489"/>
<dbReference type="CTD" id="2752"/>
<dbReference type="VEuPathDB" id="HostDB:geneid_396489"/>
<dbReference type="eggNOG" id="KOG0683">
    <property type="taxonomic scope" value="Eukaryota"/>
</dbReference>
<dbReference type="InParanoid" id="P16580"/>
<dbReference type="PhylomeDB" id="P16580"/>
<dbReference type="PRO" id="PR:P16580"/>
<dbReference type="Proteomes" id="UP000000539">
    <property type="component" value="Unassembled WGS sequence"/>
</dbReference>
<dbReference type="GO" id="GO:0005737">
    <property type="term" value="C:cytoplasm"/>
    <property type="evidence" value="ECO:0000318"/>
    <property type="project" value="GO_Central"/>
</dbReference>
<dbReference type="GO" id="GO:0005739">
    <property type="term" value="C:mitochondrion"/>
    <property type="evidence" value="ECO:0007669"/>
    <property type="project" value="UniProtKB-SubCell"/>
</dbReference>
<dbReference type="GO" id="GO:0005524">
    <property type="term" value="F:ATP binding"/>
    <property type="evidence" value="ECO:0007669"/>
    <property type="project" value="UniProtKB-KW"/>
</dbReference>
<dbReference type="GO" id="GO:0004351">
    <property type="term" value="F:glutamate decarboxylase activity"/>
    <property type="evidence" value="ECO:0007669"/>
    <property type="project" value="UniProtKB-EC"/>
</dbReference>
<dbReference type="GO" id="GO:0004356">
    <property type="term" value="F:glutamine synthetase activity"/>
    <property type="evidence" value="ECO:0000318"/>
    <property type="project" value="GO_Central"/>
</dbReference>
<dbReference type="GO" id="GO:0046872">
    <property type="term" value="F:metal ion binding"/>
    <property type="evidence" value="ECO:0007669"/>
    <property type="project" value="UniProtKB-KW"/>
</dbReference>
<dbReference type="GO" id="GO:0006542">
    <property type="term" value="P:glutamine biosynthetic process"/>
    <property type="evidence" value="ECO:0000318"/>
    <property type="project" value="GO_Central"/>
</dbReference>
<dbReference type="FunFam" id="3.10.20.70:FF:000004">
    <property type="entry name" value="Glutamine synthetase"/>
    <property type="match status" value="1"/>
</dbReference>
<dbReference type="FunFam" id="3.30.590.10:FF:000011">
    <property type="entry name" value="Glutamine synthetase"/>
    <property type="match status" value="1"/>
</dbReference>
<dbReference type="Gene3D" id="3.10.20.70">
    <property type="entry name" value="Glutamine synthetase, N-terminal domain"/>
    <property type="match status" value="1"/>
</dbReference>
<dbReference type="Gene3D" id="3.30.590.10">
    <property type="entry name" value="Glutamine synthetase/guanido kinase, catalytic domain"/>
    <property type="match status" value="1"/>
</dbReference>
<dbReference type="InterPro" id="IPR008147">
    <property type="entry name" value="Gln_synt_N"/>
</dbReference>
<dbReference type="InterPro" id="IPR036651">
    <property type="entry name" value="Gln_synt_N_sf"/>
</dbReference>
<dbReference type="InterPro" id="IPR014746">
    <property type="entry name" value="Gln_synth/guanido_kin_cat_dom"/>
</dbReference>
<dbReference type="InterPro" id="IPR008146">
    <property type="entry name" value="Gln_synth_cat_dom"/>
</dbReference>
<dbReference type="InterPro" id="IPR027303">
    <property type="entry name" value="Gln_synth_gly_rich_site"/>
</dbReference>
<dbReference type="InterPro" id="IPR027302">
    <property type="entry name" value="Gln_synth_N_conserv_site"/>
</dbReference>
<dbReference type="InterPro" id="IPR050292">
    <property type="entry name" value="Glutamine_Synthetase"/>
</dbReference>
<dbReference type="PANTHER" id="PTHR20852">
    <property type="entry name" value="GLUTAMINE SYNTHETASE"/>
    <property type="match status" value="1"/>
</dbReference>
<dbReference type="PANTHER" id="PTHR20852:SF45">
    <property type="entry name" value="GLUTAMINE SYNTHETASE"/>
    <property type="match status" value="1"/>
</dbReference>
<dbReference type="Pfam" id="PF00120">
    <property type="entry name" value="Gln-synt_C"/>
    <property type="match status" value="1"/>
</dbReference>
<dbReference type="Pfam" id="PF03951">
    <property type="entry name" value="Gln-synt_N"/>
    <property type="match status" value="1"/>
</dbReference>
<dbReference type="SMART" id="SM01230">
    <property type="entry name" value="Gln-synt_C"/>
    <property type="match status" value="1"/>
</dbReference>
<dbReference type="SUPFAM" id="SSF54368">
    <property type="entry name" value="Glutamine synthetase, N-terminal domain"/>
    <property type="match status" value="1"/>
</dbReference>
<dbReference type="SUPFAM" id="SSF55931">
    <property type="entry name" value="Glutamine synthetase/guanido kinase"/>
    <property type="match status" value="1"/>
</dbReference>
<dbReference type="PROSITE" id="PS00180">
    <property type="entry name" value="GLNA_1"/>
    <property type="match status" value="1"/>
</dbReference>
<dbReference type="PROSITE" id="PS00181">
    <property type="entry name" value="GLNA_ATP"/>
    <property type="match status" value="1"/>
</dbReference>
<dbReference type="PROSITE" id="PS51986">
    <property type="entry name" value="GS_BETA_GRASP"/>
    <property type="match status" value="1"/>
</dbReference>
<dbReference type="PROSITE" id="PS51987">
    <property type="entry name" value="GS_CATALYTIC"/>
    <property type="match status" value="1"/>
</dbReference>
<reference key="1">
    <citation type="journal article" date="1989" name="Gene">
        <title>The structure of the chicken glutamine synthetase-encoding gene.</title>
        <authorList>
            <person name="Pu H."/>
            <person name="Young A.P."/>
        </authorList>
    </citation>
    <scope>NUCLEOTIDE SEQUENCE [MRNA]</scope>
    <source>
        <tissue>Retina</tissue>
    </source>
</reference>
<reference key="2">
    <citation type="journal article" date="1992" name="Mol. Biol. Evol.">
        <title>Metabolic compartmentation of vertebrate glutamine synthetase: putative mitochondrial targeting signal in avian liver glutamine synthetase.</title>
        <authorList>
            <person name="Campbell J.W."/>
            <person name="Smith D.D. Jr."/>
        </authorList>
    </citation>
    <scope>NUCLEOTIDE SEQUENCE [MRNA]</scope>
    <scope>TISSUE SPECIFICITY</scope>
    <source>
        <tissue>Liver</tissue>
    </source>
</reference>
<reference key="3">
    <citation type="submission" date="2008-01" db="EMBL/GenBank/DDBJ databases">
        <title>Evolution of mitochondrial targeting mechanisms: tissue-specific subcellular localization of glutamine synthetase.</title>
        <authorList>
            <person name="Matthews G.D."/>
            <person name="Gur N."/>
            <person name="Pines O."/>
            <person name="Vardimon L."/>
        </authorList>
    </citation>
    <scope>NUCLEOTIDE SEQUENCE [GENOMIC DNA] OF 1-55</scope>
</reference>
<reference key="4">
    <citation type="journal article" date="1972" name="J. Biol. Chem.">
        <title>Glutamine synthetase. A mitochondrial enzyme in uricotelic species.</title>
        <authorList>
            <person name="Vorhaben J.E."/>
            <person name="Campbell J.W."/>
        </authorList>
    </citation>
    <scope>FUNCTION</scope>
    <scope>SUBCELLULAR LOCATION</scope>
</reference>
<reference key="5">
    <citation type="journal article" date="2003" name="J. Neuroimmunol.">
        <title>A non-mitochondrial carboxylase, related to glutamate action is synthesized in the retina of the chick embryo.</title>
        <authorList>
            <person name="Sattayasai N."/>
            <person name="Sattayasai J."/>
            <person name="Daduang S."/>
            <person name="Chahomchuen T."/>
            <person name="Ketkaew S."/>
            <person name="Puchongkavarin H."/>
        </authorList>
    </citation>
    <scope>COFACTOR</scope>
    <scope>SUBCELLULAR LOCATION</scope>
    <scope>DEVELOPMENTAL STAGE</scope>
    <scope>INDUCTION</scope>
</reference>
<reference key="6">
    <citation type="journal article" date="2009" name="Curr. Eye Res.">
        <title>A biotin-coupled bifunctional enzyme exhibiting both glutamine synthetase activity and glutamate decarboxylase activity.</title>
        <authorList>
            <person name="Arunchaipong K."/>
            <person name="Sattayasai N."/>
            <person name="Sattayasai J."/>
            <person name="Svasti J."/>
            <person name="Rimlumduan T."/>
        </authorList>
    </citation>
    <scope>IDENTIFICATION BY MASS SPECTROMETRY</scope>
    <scope>FUNCTION</scope>
    <scope>CATALYTIC ACTIVITY</scope>
    <scope>COFACTOR</scope>
    <scope>ACTIVITY REGULATION</scope>
    <scope>SUBUNIT</scope>
</reference>
<name>GLNA_CHICK</name>
<evidence type="ECO:0000250" key="1">
    <source>
        <dbReference type="UniProtKB" id="P15104"/>
    </source>
</evidence>
<evidence type="ECO:0000250" key="2">
    <source>
        <dbReference type="UniProtKB" id="P9WN39"/>
    </source>
</evidence>
<evidence type="ECO:0000255" key="3">
    <source>
        <dbReference type="PROSITE-ProRule" id="PRU01330"/>
    </source>
</evidence>
<evidence type="ECO:0000255" key="4">
    <source>
        <dbReference type="PROSITE-ProRule" id="PRU01331"/>
    </source>
</evidence>
<evidence type="ECO:0000269" key="5">
    <source>
    </source>
</evidence>
<evidence type="ECO:0000269" key="6">
    <source>
    </source>
</evidence>
<evidence type="ECO:0000269" key="7">
    <source>
    </source>
</evidence>
<evidence type="ECO:0000269" key="8">
    <source>
    </source>
</evidence>
<evidence type="ECO:0000303" key="9">
    <source>
    </source>
</evidence>
<evidence type="ECO:0000305" key="10"/>
<proteinExistence type="evidence at protein level"/>
<feature type="chain" id="PRO_0000153144" description="Glutamine synthetase">
    <location>
        <begin position="1"/>
        <end position="373"/>
    </location>
</feature>
<feature type="domain" description="GS beta-grasp" evidence="3">
    <location>
        <begin position="24"/>
        <end position="106"/>
    </location>
</feature>
<feature type="domain" description="GS catalytic" evidence="4">
    <location>
        <begin position="113"/>
        <end position="373"/>
    </location>
</feature>
<feature type="binding site" evidence="1">
    <location>
        <position position="134"/>
    </location>
    <ligand>
        <name>ATP</name>
        <dbReference type="ChEBI" id="CHEBI:30616"/>
    </ligand>
</feature>
<feature type="binding site" evidence="1">
    <location>
        <position position="134"/>
    </location>
    <ligand>
        <name>Mn(2+)</name>
        <dbReference type="ChEBI" id="CHEBI:29035"/>
        <label>1</label>
    </ligand>
</feature>
<feature type="binding site" evidence="1">
    <location>
        <position position="136"/>
    </location>
    <ligand>
        <name>Mn(2+)</name>
        <dbReference type="ChEBI" id="CHEBI:29035"/>
        <label>2</label>
    </ligand>
</feature>
<feature type="binding site" evidence="1">
    <location>
        <position position="196"/>
    </location>
    <ligand>
        <name>Mn(2+)</name>
        <dbReference type="ChEBI" id="CHEBI:29035"/>
        <label>2</label>
    </ligand>
</feature>
<feature type="binding site" evidence="1">
    <location>
        <begin position="203"/>
        <end position="208"/>
    </location>
    <ligand>
        <name>ATP</name>
        <dbReference type="ChEBI" id="CHEBI:30616"/>
    </ligand>
</feature>
<feature type="binding site" evidence="1">
    <location>
        <position position="203"/>
    </location>
    <ligand>
        <name>Mn(2+)</name>
        <dbReference type="ChEBI" id="CHEBI:29035"/>
        <label>2</label>
    </ligand>
</feature>
<feature type="binding site" evidence="2">
    <location>
        <begin position="246"/>
        <end position="247"/>
    </location>
    <ligand>
        <name>L-glutamate</name>
        <dbReference type="ChEBI" id="CHEBI:29985"/>
    </ligand>
</feature>
<feature type="binding site" evidence="1">
    <location>
        <position position="253"/>
    </location>
    <ligand>
        <name>Mn(2+)</name>
        <dbReference type="ChEBI" id="CHEBI:29035"/>
        <label>1</label>
    </ligand>
</feature>
<feature type="binding site" evidence="1">
    <location>
        <begin position="255"/>
        <end position="257"/>
    </location>
    <ligand>
        <name>ATP</name>
        <dbReference type="ChEBI" id="CHEBI:30616"/>
    </ligand>
</feature>
<feature type="binding site" evidence="1">
    <location>
        <position position="319"/>
    </location>
    <ligand>
        <name>ATP</name>
        <dbReference type="ChEBI" id="CHEBI:30616"/>
    </ligand>
</feature>
<feature type="binding site" evidence="2">
    <location>
        <position position="319"/>
    </location>
    <ligand>
        <name>L-glutamate</name>
        <dbReference type="ChEBI" id="CHEBI:29985"/>
    </ligand>
</feature>
<feature type="binding site" evidence="1">
    <location>
        <position position="324"/>
    </location>
    <ligand>
        <name>ATP</name>
        <dbReference type="ChEBI" id="CHEBI:30616"/>
    </ligand>
</feature>
<feature type="binding site" evidence="1">
    <location>
        <begin position="336"/>
        <end position="338"/>
    </location>
    <ligand>
        <name>ADP</name>
        <dbReference type="ChEBI" id="CHEBI:456216"/>
    </ligand>
</feature>
<feature type="binding site" evidence="1">
    <location>
        <position position="338"/>
    </location>
    <ligand>
        <name>Mn(2+)</name>
        <dbReference type="ChEBI" id="CHEBI:29035"/>
        <label>1</label>
    </ligand>
</feature>
<feature type="binding site" evidence="2">
    <location>
        <position position="340"/>
    </location>
    <ligand>
        <name>L-glutamate</name>
        <dbReference type="ChEBI" id="CHEBI:29985"/>
    </ligand>
</feature>
<accession>P16580</accession>
<accession>B0FZC2</accession>